<accession>A9MHL5</accession>
<protein>
    <recommendedName>
        <fullName evidence="1">4-hydroxy-3-methylbut-2-en-1-yl diphosphate synthase (flavodoxin)</fullName>
        <ecNumber evidence="1">1.17.7.3</ecNumber>
    </recommendedName>
    <alternativeName>
        <fullName evidence="1">1-hydroxy-2-methyl-2-(E)-butenyl 4-diphosphate synthase</fullName>
    </alternativeName>
</protein>
<proteinExistence type="inferred from homology"/>
<name>ISPG_SALAR</name>
<sequence>MHNQAPIQRRKSTRIYVGNVPIGDGAPITVQSMTNTRTTDVEATVNQIKALERVGADIVRVSVPTMDAAEAFKLIKQQVSVPLVADIHFDYRIALKVAEYGVDCLRINPGNIGNEERIRMVVDCARDKNIPIRIGVNAGSLEKDLQEKYGEPTPQALLESAMRHVDHLDRLNFEQFKVSVKASDVFLAVESYRLLAKQIDQPLHLGITEAGGARSGAVKSAIGLGLLLSEGIGDTLRVSLAADPVEEIKVGFDILKSLRIRARGINFIACPTCSRQEFDVIGTVNALEQRLEDIITPMDVSIIGCVVNGPGEALVSTLGVTGGNKKSGLYEDGVRKDRLDNDDMIAQLESRIRAKASQLDEARRIDVLQVEK</sequence>
<keyword id="KW-0004">4Fe-4S</keyword>
<keyword id="KW-0408">Iron</keyword>
<keyword id="KW-0411">Iron-sulfur</keyword>
<keyword id="KW-0414">Isoprene biosynthesis</keyword>
<keyword id="KW-0479">Metal-binding</keyword>
<keyword id="KW-0560">Oxidoreductase</keyword>
<keyword id="KW-1185">Reference proteome</keyword>
<evidence type="ECO:0000255" key="1">
    <source>
        <dbReference type="HAMAP-Rule" id="MF_00159"/>
    </source>
</evidence>
<comment type="function">
    <text evidence="1">Converts 2C-methyl-D-erythritol 2,4-cyclodiphosphate (ME-2,4cPP) into 1-hydroxy-2-methyl-2-(E)-butenyl 4-diphosphate.</text>
</comment>
<comment type="catalytic activity">
    <reaction evidence="1">
        <text>(2E)-4-hydroxy-3-methylbut-2-enyl diphosphate + oxidized [flavodoxin] + H2O + 2 H(+) = 2-C-methyl-D-erythritol 2,4-cyclic diphosphate + reduced [flavodoxin]</text>
        <dbReference type="Rhea" id="RHEA:43604"/>
        <dbReference type="Rhea" id="RHEA-COMP:10622"/>
        <dbReference type="Rhea" id="RHEA-COMP:10623"/>
        <dbReference type="ChEBI" id="CHEBI:15377"/>
        <dbReference type="ChEBI" id="CHEBI:15378"/>
        <dbReference type="ChEBI" id="CHEBI:57618"/>
        <dbReference type="ChEBI" id="CHEBI:58210"/>
        <dbReference type="ChEBI" id="CHEBI:58483"/>
        <dbReference type="ChEBI" id="CHEBI:128753"/>
        <dbReference type="EC" id="1.17.7.3"/>
    </reaction>
</comment>
<comment type="cofactor">
    <cofactor evidence="1">
        <name>[4Fe-4S] cluster</name>
        <dbReference type="ChEBI" id="CHEBI:49883"/>
    </cofactor>
    <text evidence="1">Binds 1 [4Fe-4S] cluster.</text>
</comment>
<comment type="pathway">
    <text evidence="1">Isoprenoid biosynthesis; isopentenyl diphosphate biosynthesis via DXP pathway; isopentenyl diphosphate from 1-deoxy-D-xylulose 5-phosphate: step 5/6.</text>
</comment>
<comment type="similarity">
    <text evidence="1">Belongs to the IspG family.</text>
</comment>
<feature type="chain" id="PRO_1000076896" description="4-hydroxy-3-methylbut-2-en-1-yl diphosphate synthase (flavodoxin)">
    <location>
        <begin position="1"/>
        <end position="372"/>
    </location>
</feature>
<feature type="binding site" evidence="1">
    <location>
        <position position="270"/>
    </location>
    <ligand>
        <name>[4Fe-4S] cluster</name>
        <dbReference type="ChEBI" id="CHEBI:49883"/>
    </ligand>
</feature>
<feature type="binding site" evidence="1">
    <location>
        <position position="273"/>
    </location>
    <ligand>
        <name>[4Fe-4S] cluster</name>
        <dbReference type="ChEBI" id="CHEBI:49883"/>
    </ligand>
</feature>
<feature type="binding site" evidence="1">
    <location>
        <position position="305"/>
    </location>
    <ligand>
        <name>[4Fe-4S] cluster</name>
        <dbReference type="ChEBI" id="CHEBI:49883"/>
    </ligand>
</feature>
<feature type="binding site" evidence="1">
    <location>
        <position position="312"/>
    </location>
    <ligand>
        <name>[4Fe-4S] cluster</name>
        <dbReference type="ChEBI" id="CHEBI:49883"/>
    </ligand>
</feature>
<dbReference type="EC" id="1.17.7.3" evidence="1"/>
<dbReference type="EMBL" id="CP000880">
    <property type="protein sequence ID" value="ABX20293.1"/>
    <property type="molecule type" value="Genomic_DNA"/>
</dbReference>
<dbReference type="SMR" id="A9MHL5"/>
<dbReference type="STRING" id="41514.SARI_00355"/>
<dbReference type="KEGG" id="ses:SARI_00355"/>
<dbReference type="HOGENOM" id="CLU_042258_0_0_6"/>
<dbReference type="UniPathway" id="UPA00056">
    <property type="reaction ID" value="UER00096"/>
</dbReference>
<dbReference type="Proteomes" id="UP000002084">
    <property type="component" value="Chromosome"/>
</dbReference>
<dbReference type="GO" id="GO:0051539">
    <property type="term" value="F:4 iron, 4 sulfur cluster binding"/>
    <property type="evidence" value="ECO:0007669"/>
    <property type="project" value="UniProtKB-UniRule"/>
</dbReference>
<dbReference type="GO" id="GO:0046429">
    <property type="term" value="F:4-hydroxy-3-methylbut-2-en-1-yl diphosphate synthase activity (ferredoxin)"/>
    <property type="evidence" value="ECO:0007669"/>
    <property type="project" value="UniProtKB-UniRule"/>
</dbReference>
<dbReference type="GO" id="GO:0141197">
    <property type="term" value="F:4-hydroxy-3-methylbut-2-enyl-diphosphate synthase activity (flavodoxin)"/>
    <property type="evidence" value="ECO:0007669"/>
    <property type="project" value="UniProtKB-EC"/>
</dbReference>
<dbReference type="GO" id="GO:0005506">
    <property type="term" value="F:iron ion binding"/>
    <property type="evidence" value="ECO:0007669"/>
    <property type="project" value="InterPro"/>
</dbReference>
<dbReference type="GO" id="GO:0019288">
    <property type="term" value="P:isopentenyl diphosphate biosynthetic process, methylerythritol 4-phosphate pathway"/>
    <property type="evidence" value="ECO:0007669"/>
    <property type="project" value="UniProtKB-UniRule"/>
</dbReference>
<dbReference type="GO" id="GO:0016114">
    <property type="term" value="P:terpenoid biosynthetic process"/>
    <property type="evidence" value="ECO:0007669"/>
    <property type="project" value="InterPro"/>
</dbReference>
<dbReference type="FunFam" id="3.20.20.20:FF:000001">
    <property type="entry name" value="4-hydroxy-3-methylbut-2-en-1-yl diphosphate synthase (flavodoxin)"/>
    <property type="match status" value="1"/>
</dbReference>
<dbReference type="FunFam" id="3.30.413.10:FF:000002">
    <property type="entry name" value="4-hydroxy-3-methylbut-2-en-1-yl diphosphate synthase (flavodoxin)"/>
    <property type="match status" value="1"/>
</dbReference>
<dbReference type="Gene3D" id="3.20.20.20">
    <property type="entry name" value="Dihydropteroate synthase-like"/>
    <property type="match status" value="1"/>
</dbReference>
<dbReference type="Gene3D" id="3.30.413.10">
    <property type="entry name" value="Sulfite Reductase Hemoprotein, domain 1"/>
    <property type="match status" value="1"/>
</dbReference>
<dbReference type="HAMAP" id="MF_00159">
    <property type="entry name" value="IspG"/>
    <property type="match status" value="1"/>
</dbReference>
<dbReference type="InterPro" id="IPR011005">
    <property type="entry name" value="Dihydropteroate_synth-like_sf"/>
</dbReference>
<dbReference type="InterPro" id="IPR016425">
    <property type="entry name" value="IspG_bac"/>
</dbReference>
<dbReference type="InterPro" id="IPR004588">
    <property type="entry name" value="IspG_bac-typ"/>
</dbReference>
<dbReference type="InterPro" id="IPR045854">
    <property type="entry name" value="NO2/SO3_Rdtase_4Fe4S_sf"/>
</dbReference>
<dbReference type="NCBIfam" id="TIGR00612">
    <property type="entry name" value="ispG_gcpE"/>
    <property type="match status" value="1"/>
</dbReference>
<dbReference type="NCBIfam" id="NF001540">
    <property type="entry name" value="PRK00366.1"/>
    <property type="match status" value="1"/>
</dbReference>
<dbReference type="PANTHER" id="PTHR30454">
    <property type="entry name" value="4-HYDROXY-3-METHYLBUT-2-EN-1-YL DIPHOSPHATE SYNTHASE"/>
    <property type="match status" value="1"/>
</dbReference>
<dbReference type="PANTHER" id="PTHR30454:SF0">
    <property type="entry name" value="4-HYDROXY-3-METHYLBUT-2-EN-1-YL DIPHOSPHATE SYNTHASE (FERREDOXIN), CHLOROPLASTIC"/>
    <property type="match status" value="1"/>
</dbReference>
<dbReference type="Pfam" id="PF04551">
    <property type="entry name" value="GcpE"/>
    <property type="match status" value="1"/>
</dbReference>
<dbReference type="PIRSF" id="PIRSF004640">
    <property type="entry name" value="IspG"/>
    <property type="match status" value="1"/>
</dbReference>
<dbReference type="SUPFAM" id="SSF51717">
    <property type="entry name" value="Dihydropteroate synthetase-like"/>
    <property type="match status" value="1"/>
</dbReference>
<dbReference type="SUPFAM" id="SSF56014">
    <property type="entry name" value="Nitrite and sulphite reductase 4Fe-4S domain-like"/>
    <property type="match status" value="1"/>
</dbReference>
<organism>
    <name type="scientific">Salmonella arizonae (strain ATCC BAA-731 / CDC346-86 / RSK2980)</name>
    <dbReference type="NCBI Taxonomy" id="41514"/>
    <lineage>
        <taxon>Bacteria</taxon>
        <taxon>Pseudomonadati</taxon>
        <taxon>Pseudomonadota</taxon>
        <taxon>Gammaproteobacteria</taxon>
        <taxon>Enterobacterales</taxon>
        <taxon>Enterobacteriaceae</taxon>
        <taxon>Salmonella</taxon>
    </lineage>
</organism>
<reference key="1">
    <citation type="submission" date="2007-11" db="EMBL/GenBank/DDBJ databases">
        <authorList>
            <consortium name="The Salmonella enterica serovar Arizonae Genome Sequencing Project"/>
            <person name="McClelland M."/>
            <person name="Sanderson E.K."/>
            <person name="Porwollik S."/>
            <person name="Spieth J."/>
            <person name="Clifton W.S."/>
            <person name="Fulton R."/>
            <person name="Chunyan W."/>
            <person name="Wollam A."/>
            <person name="Shah N."/>
            <person name="Pepin K."/>
            <person name="Bhonagiri V."/>
            <person name="Nash W."/>
            <person name="Johnson M."/>
            <person name="Thiruvilangam P."/>
            <person name="Wilson R."/>
        </authorList>
    </citation>
    <scope>NUCLEOTIDE SEQUENCE [LARGE SCALE GENOMIC DNA]</scope>
    <source>
        <strain>ATCC BAA-731 / CDC346-86 / RSK2980</strain>
    </source>
</reference>
<gene>
    <name evidence="1" type="primary">ispG</name>
    <name type="ordered locus">SARI_00355</name>
</gene>